<dbReference type="EC" id="3.6.1.-" evidence="1"/>
<dbReference type="EMBL" id="CP001063">
    <property type="protein sequence ID" value="ACD07237.1"/>
    <property type="molecule type" value="Genomic_DNA"/>
</dbReference>
<dbReference type="RefSeq" id="WP_000456725.1">
    <property type="nucleotide sequence ID" value="NC_010658.1"/>
</dbReference>
<dbReference type="SMR" id="B2U449"/>
<dbReference type="STRING" id="344609.SbBS512_E2074"/>
<dbReference type="KEGG" id="sbc:SbBS512_E2074"/>
<dbReference type="HOGENOM" id="CLU_040940_5_2_6"/>
<dbReference type="Proteomes" id="UP000001030">
    <property type="component" value="Chromosome"/>
</dbReference>
<dbReference type="GO" id="GO:0010945">
    <property type="term" value="F:coenzyme A diphosphatase activity"/>
    <property type="evidence" value="ECO:0007669"/>
    <property type="project" value="InterPro"/>
</dbReference>
<dbReference type="GO" id="GO:0000287">
    <property type="term" value="F:magnesium ion binding"/>
    <property type="evidence" value="ECO:0007669"/>
    <property type="project" value="UniProtKB-UniRule"/>
</dbReference>
<dbReference type="GO" id="GO:0030145">
    <property type="term" value="F:manganese ion binding"/>
    <property type="evidence" value="ECO:0007669"/>
    <property type="project" value="UniProtKB-UniRule"/>
</dbReference>
<dbReference type="GO" id="GO:0009132">
    <property type="term" value="P:nucleoside diphosphate metabolic process"/>
    <property type="evidence" value="ECO:0007669"/>
    <property type="project" value="InterPro"/>
</dbReference>
<dbReference type="CDD" id="cd03426">
    <property type="entry name" value="NUDIX_CoAse_Nudt7"/>
    <property type="match status" value="1"/>
</dbReference>
<dbReference type="FunFam" id="3.90.79.10:FF:000013">
    <property type="entry name" value="Uncharacterized Nudix hydrolase NudL"/>
    <property type="match status" value="1"/>
</dbReference>
<dbReference type="Gene3D" id="3.90.79.10">
    <property type="entry name" value="Nucleoside Triphosphate Pyrophosphohydrolase"/>
    <property type="match status" value="1"/>
</dbReference>
<dbReference type="HAMAP" id="MF_01592">
    <property type="entry name" value="Nudix_NudL"/>
    <property type="match status" value="1"/>
</dbReference>
<dbReference type="InterPro" id="IPR045121">
    <property type="entry name" value="CoAse"/>
</dbReference>
<dbReference type="InterPro" id="IPR015797">
    <property type="entry name" value="NUDIX_hydrolase-like_dom_sf"/>
</dbReference>
<dbReference type="InterPro" id="IPR000086">
    <property type="entry name" value="NUDIX_hydrolase_dom"/>
</dbReference>
<dbReference type="InterPro" id="IPR000059">
    <property type="entry name" value="NUDIX_hydrolase_NudL_CS"/>
</dbReference>
<dbReference type="InterPro" id="IPR023735">
    <property type="entry name" value="Nudix_NudL"/>
</dbReference>
<dbReference type="NCBIfam" id="NF007980">
    <property type="entry name" value="PRK10707.1"/>
    <property type="match status" value="1"/>
</dbReference>
<dbReference type="PANTHER" id="PTHR12992:SF11">
    <property type="entry name" value="MITOCHONDRIAL COENZYME A DIPHOSPHATASE NUDT8"/>
    <property type="match status" value="1"/>
</dbReference>
<dbReference type="PANTHER" id="PTHR12992">
    <property type="entry name" value="NUDIX HYDROLASE"/>
    <property type="match status" value="1"/>
</dbReference>
<dbReference type="Pfam" id="PF00293">
    <property type="entry name" value="NUDIX"/>
    <property type="match status" value="1"/>
</dbReference>
<dbReference type="SUPFAM" id="SSF55811">
    <property type="entry name" value="Nudix"/>
    <property type="match status" value="1"/>
</dbReference>
<dbReference type="PROSITE" id="PS51462">
    <property type="entry name" value="NUDIX"/>
    <property type="match status" value="1"/>
</dbReference>
<dbReference type="PROSITE" id="PS01293">
    <property type="entry name" value="NUDIX_COA"/>
    <property type="match status" value="1"/>
</dbReference>
<proteinExistence type="inferred from homology"/>
<accession>B2U449</accession>
<reference key="1">
    <citation type="submission" date="2008-05" db="EMBL/GenBank/DDBJ databases">
        <title>Complete sequence of Shigella boydii serotype 18 strain BS512.</title>
        <authorList>
            <person name="Rasko D.A."/>
            <person name="Rosovitz M."/>
            <person name="Maurelli A.T."/>
            <person name="Myers G."/>
            <person name="Seshadri R."/>
            <person name="Cer R."/>
            <person name="Jiang L."/>
            <person name="Ravel J."/>
            <person name="Sebastian Y."/>
        </authorList>
    </citation>
    <scope>NUCLEOTIDE SEQUENCE [LARGE SCALE GENOMIC DNA]</scope>
    <source>
        <strain>CDC 3083-94 / BS512</strain>
    </source>
</reference>
<organism>
    <name type="scientific">Shigella boydii serotype 18 (strain CDC 3083-94 / BS512)</name>
    <dbReference type="NCBI Taxonomy" id="344609"/>
    <lineage>
        <taxon>Bacteria</taxon>
        <taxon>Pseudomonadati</taxon>
        <taxon>Pseudomonadota</taxon>
        <taxon>Gammaproteobacteria</taxon>
        <taxon>Enterobacterales</taxon>
        <taxon>Enterobacteriaceae</taxon>
        <taxon>Shigella</taxon>
    </lineage>
</organism>
<comment type="function">
    <text evidence="1">Probably mediates the hydrolysis of some nucleoside diphosphate derivatives.</text>
</comment>
<comment type="cofactor">
    <cofactor evidence="1">
        <name>Mn(2+)</name>
        <dbReference type="ChEBI" id="CHEBI:29035"/>
    </cofactor>
    <cofactor evidence="1">
        <name>Mg(2+)</name>
        <dbReference type="ChEBI" id="CHEBI:18420"/>
    </cofactor>
</comment>
<comment type="similarity">
    <text evidence="1">Belongs to the Nudix hydrolase family. PCD1 subfamily.</text>
</comment>
<evidence type="ECO:0000255" key="1">
    <source>
        <dbReference type="HAMAP-Rule" id="MF_01592"/>
    </source>
</evidence>
<feature type="chain" id="PRO_1000147828" description="Uncharacterized Nudix hydrolase NudL">
    <location>
        <begin position="1"/>
        <end position="192"/>
    </location>
</feature>
<feature type="domain" description="Nudix hydrolase" evidence="1">
    <location>
        <begin position="29"/>
        <end position="160"/>
    </location>
</feature>
<feature type="short sequence motif" description="Nudix box">
    <location>
        <begin position="67"/>
        <end position="89"/>
    </location>
</feature>
<feature type="binding site" evidence="1">
    <location>
        <position position="83"/>
    </location>
    <ligand>
        <name>Mg(2+)</name>
        <dbReference type="ChEBI" id="CHEBI:18420"/>
    </ligand>
</feature>
<feature type="binding site" evidence="1">
    <location>
        <position position="87"/>
    </location>
    <ligand>
        <name>Mg(2+)</name>
        <dbReference type="ChEBI" id="CHEBI:18420"/>
    </ligand>
</feature>
<name>NUDL_SHIB3</name>
<keyword id="KW-0378">Hydrolase</keyword>
<keyword id="KW-0460">Magnesium</keyword>
<keyword id="KW-0464">Manganese</keyword>
<keyword id="KW-0479">Metal-binding</keyword>
<keyword id="KW-1185">Reference proteome</keyword>
<protein>
    <recommendedName>
        <fullName evidence="1">Uncharacterized Nudix hydrolase NudL</fullName>
        <ecNumber evidence="1">3.6.1.-</ecNumber>
    </recommendedName>
</protein>
<sequence>MEYRSLTLDDFLSRFQLLRPQINRETLNHRQAAVLIPIVRRPQPGLLLTQRSIHLRKHAGQVAFPGGAVDDTDASVIAAALREAEEEVAIPPSAVEVIGVLPPVDSVTGYQVTPVVGIIPPDLPYRASEDEVSAVFEMPLAQALHLGRYHPLDIYRRGDSHRVWLSWYEQYFVWGMTAGIIRELALQIGVKP</sequence>
<gene>
    <name evidence="1" type="primary">nudL</name>
    <name type="ordered locus">SbBS512_E2074</name>
</gene>